<gene>
    <name evidence="1" type="primary">rpmB</name>
    <name type="ordered locus">CLM_2798</name>
</gene>
<sequence>MSRKCEICGKGVVYGVQYSHSHRQSKRSFAPNIKRVKAIVNGTPKRVHVCTRCLRSGKVQRAI</sequence>
<proteinExistence type="inferred from homology"/>
<evidence type="ECO:0000255" key="1">
    <source>
        <dbReference type="HAMAP-Rule" id="MF_00373"/>
    </source>
</evidence>
<evidence type="ECO:0000305" key="2"/>
<reference key="1">
    <citation type="submission" date="2008-10" db="EMBL/GenBank/DDBJ databases">
        <title>Genome sequence of Clostridium botulinum A2 Kyoto.</title>
        <authorList>
            <person name="Shrivastava S."/>
            <person name="Brinkac L.M."/>
            <person name="Brown J.L."/>
            <person name="Bruce D."/>
            <person name="Detter C.C."/>
            <person name="Johnson E.A."/>
            <person name="Munk C.A."/>
            <person name="Smith L.A."/>
            <person name="Smith T.J."/>
            <person name="Sutton G."/>
            <person name="Brettin T.S."/>
        </authorList>
    </citation>
    <scope>NUCLEOTIDE SEQUENCE [LARGE SCALE GENOMIC DNA]</scope>
    <source>
        <strain>Kyoto / Type A2</strain>
    </source>
</reference>
<name>RL28_CLOBJ</name>
<feature type="chain" id="PRO_1000195913" description="Large ribosomal subunit protein bL28">
    <location>
        <begin position="1"/>
        <end position="63"/>
    </location>
</feature>
<protein>
    <recommendedName>
        <fullName evidence="1">Large ribosomal subunit protein bL28</fullName>
    </recommendedName>
    <alternativeName>
        <fullName evidence="2">50S ribosomal protein L28</fullName>
    </alternativeName>
</protein>
<accession>C1FSR8</accession>
<dbReference type="EMBL" id="CP001581">
    <property type="protein sequence ID" value="ACO83652.1"/>
    <property type="molecule type" value="Genomic_DNA"/>
</dbReference>
<dbReference type="RefSeq" id="WP_003395976.1">
    <property type="nucleotide sequence ID" value="NC_012563.1"/>
</dbReference>
<dbReference type="SMR" id="C1FSR8"/>
<dbReference type="GeneID" id="92939241"/>
<dbReference type="KEGG" id="cby:CLM_2798"/>
<dbReference type="eggNOG" id="COG0227">
    <property type="taxonomic scope" value="Bacteria"/>
</dbReference>
<dbReference type="HOGENOM" id="CLU_064548_7_0_9"/>
<dbReference type="Proteomes" id="UP000001374">
    <property type="component" value="Chromosome"/>
</dbReference>
<dbReference type="GO" id="GO:1990904">
    <property type="term" value="C:ribonucleoprotein complex"/>
    <property type="evidence" value="ECO:0007669"/>
    <property type="project" value="UniProtKB-KW"/>
</dbReference>
<dbReference type="GO" id="GO:0005840">
    <property type="term" value="C:ribosome"/>
    <property type="evidence" value="ECO:0007669"/>
    <property type="project" value="UniProtKB-KW"/>
</dbReference>
<dbReference type="GO" id="GO:0003735">
    <property type="term" value="F:structural constituent of ribosome"/>
    <property type="evidence" value="ECO:0007669"/>
    <property type="project" value="InterPro"/>
</dbReference>
<dbReference type="GO" id="GO:0006412">
    <property type="term" value="P:translation"/>
    <property type="evidence" value="ECO:0007669"/>
    <property type="project" value="UniProtKB-UniRule"/>
</dbReference>
<dbReference type="Gene3D" id="2.30.170.40">
    <property type="entry name" value="Ribosomal protein L28/L24"/>
    <property type="match status" value="1"/>
</dbReference>
<dbReference type="HAMAP" id="MF_00373">
    <property type="entry name" value="Ribosomal_bL28"/>
    <property type="match status" value="1"/>
</dbReference>
<dbReference type="InterPro" id="IPR050096">
    <property type="entry name" value="Bacterial_rp_bL28"/>
</dbReference>
<dbReference type="InterPro" id="IPR026569">
    <property type="entry name" value="Ribosomal_bL28"/>
</dbReference>
<dbReference type="InterPro" id="IPR034704">
    <property type="entry name" value="Ribosomal_bL28/bL31-like_sf"/>
</dbReference>
<dbReference type="InterPro" id="IPR001383">
    <property type="entry name" value="Ribosomal_bL28_bact-type"/>
</dbReference>
<dbReference type="InterPro" id="IPR037147">
    <property type="entry name" value="Ribosomal_bL28_sf"/>
</dbReference>
<dbReference type="NCBIfam" id="TIGR00009">
    <property type="entry name" value="L28"/>
    <property type="match status" value="1"/>
</dbReference>
<dbReference type="PANTHER" id="PTHR39080">
    <property type="entry name" value="50S RIBOSOMAL PROTEIN L28"/>
    <property type="match status" value="1"/>
</dbReference>
<dbReference type="PANTHER" id="PTHR39080:SF1">
    <property type="entry name" value="LARGE RIBOSOMAL SUBUNIT PROTEIN BL28A"/>
    <property type="match status" value="1"/>
</dbReference>
<dbReference type="Pfam" id="PF00830">
    <property type="entry name" value="Ribosomal_L28"/>
    <property type="match status" value="1"/>
</dbReference>
<dbReference type="SUPFAM" id="SSF143800">
    <property type="entry name" value="L28p-like"/>
    <property type="match status" value="1"/>
</dbReference>
<keyword id="KW-0687">Ribonucleoprotein</keyword>
<keyword id="KW-0689">Ribosomal protein</keyword>
<organism>
    <name type="scientific">Clostridium botulinum (strain Kyoto / Type A2)</name>
    <dbReference type="NCBI Taxonomy" id="536232"/>
    <lineage>
        <taxon>Bacteria</taxon>
        <taxon>Bacillati</taxon>
        <taxon>Bacillota</taxon>
        <taxon>Clostridia</taxon>
        <taxon>Eubacteriales</taxon>
        <taxon>Clostridiaceae</taxon>
        <taxon>Clostridium</taxon>
    </lineage>
</organism>
<comment type="similarity">
    <text evidence="1">Belongs to the bacterial ribosomal protein bL28 family.</text>
</comment>